<gene>
    <name evidence="5 8" type="primary">hmg-3</name>
    <name evidence="8" type="ORF">C32F10.5</name>
</gene>
<evidence type="ECO:0000250" key="1">
    <source>
        <dbReference type="UniProtKB" id="Q08945"/>
    </source>
</evidence>
<evidence type="ECO:0000255" key="2">
    <source>
        <dbReference type="PROSITE-ProRule" id="PRU00267"/>
    </source>
</evidence>
<evidence type="ECO:0000256" key="3">
    <source>
        <dbReference type="SAM" id="MobiDB-lite"/>
    </source>
</evidence>
<evidence type="ECO:0000269" key="4">
    <source>
    </source>
</evidence>
<evidence type="ECO:0000303" key="5">
    <source>
    </source>
</evidence>
<evidence type="ECO:0000305" key="6"/>
<evidence type="ECO:0000305" key="7">
    <source>
    </source>
</evidence>
<evidence type="ECO:0000312" key="8">
    <source>
        <dbReference type="WormBase" id="C32F10.5"/>
    </source>
</evidence>
<proteinExistence type="evidence at protein level"/>
<dbReference type="EMBL" id="BX284601">
    <property type="protein sequence ID" value="CCD61910.1"/>
    <property type="molecule type" value="Genomic_DNA"/>
</dbReference>
<dbReference type="PIR" id="T34025">
    <property type="entry name" value="T34025"/>
</dbReference>
<dbReference type="RefSeq" id="NP_491688.1">
    <property type="nucleotide sequence ID" value="NM_059287.4"/>
</dbReference>
<dbReference type="SMR" id="O01683"/>
<dbReference type="BioGRID" id="37705">
    <property type="interactions" value="148"/>
</dbReference>
<dbReference type="ComplexPortal" id="CPX-3890">
    <property type="entry name" value="FACT complex hmg-3 variant"/>
</dbReference>
<dbReference type="FunCoup" id="O01683">
    <property type="interactions" value="2866"/>
</dbReference>
<dbReference type="IntAct" id="O01683">
    <property type="interactions" value="1"/>
</dbReference>
<dbReference type="STRING" id="6239.C32F10.5.1"/>
<dbReference type="iPTMnet" id="O01683"/>
<dbReference type="PaxDb" id="6239-C32F10.5"/>
<dbReference type="PeptideAtlas" id="O01683"/>
<dbReference type="EnsemblMetazoa" id="C32F10.5.1">
    <property type="protein sequence ID" value="C32F10.5.1"/>
    <property type="gene ID" value="WBGene00001973"/>
</dbReference>
<dbReference type="GeneID" id="172250"/>
<dbReference type="KEGG" id="cel:CELE_C32F10.5"/>
<dbReference type="UCSC" id="C32F10.5">
    <property type="organism name" value="c. elegans"/>
</dbReference>
<dbReference type="AGR" id="WB:WBGene00001973"/>
<dbReference type="CTD" id="172250"/>
<dbReference type="WormBase" id="C32F10.5">
    <property type="protein sequence ID" value="CE08542"/>
    <property type="gene ID" value="WBGene00001973"/>
    <property type="gene designation" value="hmg-3"/>
</dbReference>
<dbReference type="eggNOG" id="KOG0526">
    <property type="taxonomic scope" value="Eukaryota"/>
</dbReference>
<dbReference type="GeneTree" id="ENSGT00940000172942"/>
<dbReference type="HOGENOM" id="CLU_017374_2_1_1"/>
<dbReference type="InParanoid" id="O01683"/>
<dbReference type="OMA" id="KNEHGIT"/>
<dbReference type="OrthoDB" id="498543at2759"/>
<dbReference type="PhylomeDB" id="O01683"/>
<dbReference type="PRO" id="PR:O01683"/>
<dbReference type="Proteomes" id="UP000001940">
    <property type="component" value="Chromosome I"/>
</dbReference>
<dbReference type="Bgee" id="WBGene00001973">
    <property type="expression patterns" value="Expressed in germ line (C elegans) and 3 other cell types or tissues"/>
</dbReference>
<dbReference type="GO" id="GO:0035101">
    <property type="term" value="C:FACT complex"/>
    <property type="evidence" value="ECO:0000318"/>
    <property type="project" value="GO_Central"/>
</dbReference>
<dbReference type="GO" id="GO:0005634">
    <property type="term" value="C:nucleus"/>
    <property type="evidence" value="ECO:0000314"/>
    <property type="project" value="UniProtKB"/>
</dbReference>
<dbReference type="GO" id="GO:0003677">
    <property type="term" value="F:DNA binding"/>
    <property type="evidence" value="ECO:0007669"/>
    <property type="project" value="UniProtKB-KW"/>
</dbReference>
<dbReference type="GO" id="GO:0042393">
    <property type="term" value="F:histone binding"/>
    <property type="evidence" value="ECO:0000318"/>
    <property type="project" value="GO_Central"/>
</dbReference>
<dbReference type="GO" id="GO:0031491">
    <property type="term" value="F:nucleosome binding"/>
    <property type="evidence" value="ECO:0000318"/>
    <property type="project" value="GO_Central"/>
</dbReference>
<dbReference type="GO" id="GO:0006281">
    <property type="term" value="P:DNA repair"/>
    <property type="evidence" value="ECO:0007669"/>
    <property type="project" value="UniProtKB-KW"/>
</dbReference>
<dbReference type="GO" id="GO:0006260">
    <property type="term" value="P:DNA replication"/>
    <property type="evidence" value="ECO:0007669"/>
    <property type="project" value="UniProtKB-KW"/>
</dbReference>
<dbReference type="GO" id="GO:0160094">
    <property type="term" value="P:nematode pharynx development"/>
    <property type="evidence" value="ECO:0000315"/>
    <property type="project" value="ComplexPortal"/>
</dbReference>
<dbReference type="GO" id="GO:0006334">
    <property type="term" value="P:nucleosome assembly"/>
    <property type="evidence" value="ECO:0000303"/>
    <property type="project" value="ComplexPortal"/>
</dbReference>
<dbReference type="GO" id="GO:0006337">
    <property type="term" value="P:nucleosome disassembly"/>
    <property type="evidence" value="ECO:0000303"/>
    <property type="project" value="ComplexPortal"/>
</dbReference>
<dbReference type="GO" id="GO:0045787">
    <property type="term" value="P:positive regulation of cell cycle"/>
    <property type="evidence" value="ECO:0000315"/>
    <property type="project" value="ComplexPortal"/>
</dbReference>
<dbReference type="GO" id="GO:1902275">
    <property type="term" value="P:regulation of chromatin organization"/>
    <property type="evidence" value="ECO:0000318"/>
    <property type="project" value="GO_Central"/>
</dbReference>
<dbReference type="GO" id="GO:0045995">
    <property type="term" value="P:regulation of embryonic development"/>
    <property type="evidence" value="ECO:0000316"/>
    <property type="project" value="UniProtKB"/>
</dbReference>
<dbReference type="CDD" id="cd21994">
    <property type="entry name" value="HMG-box_SSRP1-like"/>
    <property type="match status" value="1"/>
</dbReference>
<dbReference type="CDD" id="cd13230">
    <property type="entry name" value="PH1_SSRP1-like"/>
    <property type="match status" value="1"/>
</dbReference>
<dbReference type="CDD" id="cd13231">
    <property type="entry name" value="PH2_SSRP1-like"/>
    <property type="match status" value="1"/>
</dbReference>
<dbReference type="FunFam" id="2.30.29.30:FF:000214">
    <property type="entry name" value="FACT complex subunit SSRP1"/>
    <property type="match status" value="1"/>
</dbReference>
<dbReference type="FunFam" id="2.30.29.150:FF:000001">
    <property type="entry name" value="Fact complex subunit ssrp1"/>
    <property type="match status" value="1"/>
</dbReference>
<dbReference type="Gene3D" id="2.30.29.150">
    <property type="match status" value="1"/>
</dbReference>
<dbReference type="Gene3D" id="1.10.30.10">
    <property type="entry name" value="High mobility group box domain"/>
    <property type="match status" value="1"/>
</dbReference>
<dbReference type="Gene3D" id="2.30.29.30">
    <property type="entry name" value="Pleckstrin-homology domain (PH domain)/Phosphotyrosine-binding domain (PTB)"/>
    <property type="match status" value="2"/>
</dbReference>
<dbReference type="Gene3D" id="2.30.29.220">
    <property type="entry name" value="Structure-specific recognition protein (SSRP1)"/>
    <property type="match status" value="1"/>
</dbReference>
<dbReference type="InterPro" id="IPR009071">
    <property type="entry name" value="HMG_box_dom"/>
</dbReference>
<dbReference type="InterPro" id="IPR036910">
    <property type="entry name" value="HMG_box_dom_sf"/>
</dbReference>
<dbReference type="InterPro" id="IPR011993">
    <property type="entry name" value="PH-like_dom_sf"/>
</dbReference>
<dbReference type="InterPro" id="IPR013719">
    <property type="entry name" value="RTT106/SPT16-like_middle_dom"/>
</dbReference>
<dbReference type="InterPro" id="IPR050454">
    <property type="entry name" value="RTT106/SSRP1_HistChap/FACT"/>
</dbReference>
<dbReference type="InterPro" id="IPR048993">
    <property type="entry name" value="SSRP1-like_PH1"/>
</dbReference>
<dbReference type="InterPro" id="IPR000969">
    <property type="entry name" value="SSRP1/POB3"/>
</dbReference>
<dbReference type="InterPro" id="IPR035417">
    <property type="entry name" value="SSRP1/POB3_N"/>
</dbReference>
<dbReference type="InterPro" id="IPR024954">
    <property type="entry name" value="SSRP1_DD"/>
</dbReference>
<dbReference type="InterPro" id="IPR038167">
    <property type="entry name" value="SSRP1_sf"/>
</dbReference>
<dbReference type="PANTHER" id="PTHR45849">
    <property type="entry name" value="FACT COMPLEX SUBUNIT SSRP1"/>
    <property type="match status" value="1"/>
</dbReference>
<dbReference type="PANTHER" id="PTHR45849:SF1">
    <property type="entry name" value="FACT COMPLEX SUBUNIT SSRP1"/>
    <property type="match status" value="1"/>
</dbReference>
<dbReference type="Pfam" id="PF00505">
    <property type="entry name" value="HMG_box"/>
    <property type="match status" value="1"/>
</dbReference>
<dbReference type="Pfam" id="PF21103">
    <property type="entry name" value="PH1_SSRP1-like"/>
    <property type="match status" value="1"/>
</dbReference>
<dbReference type="Pfam" id="PF17292">
    <property type="entry name" value="POB3_N"/>
    <property type="match status" value="1"/>
</dbReference>
<dbReference type="Pfam" id="PF08512">
    <property type="entry name" value="Rttp106-like_middle"/>
    <property type="match status" value="1"/>
</dbReference>
<dbReference type="Pfam" id="PF03531">
    <property type="entry name" value="SSrecog"/>
    <property type="match status" value="1"/>
</dbReference>
<dbReference type="PRINTS" id="PR00887">
    <property type="entry name" value="SSRCOGNITION"/>
</dbReference>
<dbReference type="SMART" id="SM00398">
    <property type="entry name" value="HMG"/>
    <property type="match status" value="1"/>
</dbReference>
<dbReference type="SMART" id="SM01287">
    <property type="entry name" value="Rtt106"/>
    <property type="match status" value="1"/>
</dbReference>
<dbReference type="SUPFAM" id="SSF47095">
    <property type="entry name" value="HMG-box"/>
    <property type="match status" value="1"/>
</dbReference>
<dbReference type="SUPFAM" id="SSF50729">
    <property type="entry name" value="PH domain-like"/>
    <property type="match status" value="1"/>
</dbReference>
<dbReference type="PROSITE" id="PS50118">
    <property type="entry name" value="HMG_BOX_2"/>
    <property type="match status" value="1"/>
</dbReference>
<protein>
    <recommendedName>
        <fullName>FACT complex subunit ssrp1-B</fullName>
    </recommendedName>
    <alternativeName>
        <fullName>Facilitates chromatin transcription complex subunit ssrp1-B</fullName>
    </alternativeName>
    <alternativeName>
        <fullName>HMG box-containing protein 3</fullName>
    </alternativeName>
    <alternativeName>
        <fullName>Structure-specific recognition protein 1-B</fullName>
    </alternativeName>
</protein>
<name>SSP1B_CAEEL</name>
<feature type="chain" id="PRO_0000245193" description="FACT complex subunit ssrp1-B">
    <location>
        <begin position="1"/>
        <end position="689"/>
    </location>
</feature>
<feature type="DNA-binding region" description="HMG box" evidence="2">
    <location>
        <begin position="561"/>
        <end position="627"/>
    </location>
</feature>
<feature type="region of interest" description="Disordered" evidence="3">
    <location>
        <begin position="434"/>
        <end position="565"/>
    </location>
</feature>
<feature type="region of interest" description="Disordered" evidence="3">
    <location>
        <begin position="592"/>
        <end position="689"/>
    </location>
</feature>
<feature type="compositionally biased region" description="Acidic residues" evidence="3">
    <location>
        <begin position="461"/>
        <end position="477"/>
    </location>
</feature>
<feature type="compositionally biased region" description="Basic and acidic residues" evidence="3">
    <location>
        <begin position="478"/>
        <end position="491"/>
    </location>
</feature>
<feature type="compositionally biased region" description="Basic and acidic residues" evidence="3">
    <location>
        <begin position="523"/>
        <end position="532"/>
    </location>
</feature>
<feature type="compositionally biased region" description="Basic and acidic residues" evidence="3">
    <location>
        <begin position="538"/>
        <end position="563"/>
    </location>
</feature>
<feature type="compositionally biased region" description="Basic and acidic residues" evidence="3">
    <location>
        <begin position="601"/>
        <end position="628"/>
    </location>
</feature>
<feature type="compositionally biased region" description="Polar residues" evidence="3">
    <location>
        <begin position="638"/>
        <end position="650"/>
    </location>
</feature>
<reference key="1">
    <citation type="journal article" date="1998" name="Science">
        <title>Genome sequence of the nematode C. elegans: a platform for investigating biology.</title>
        <authorList>
            <consortium name="The C. elegans sequencing consortium"/>
        </authorList>
    </citation>
    <scope>NUCLEOTIDE SEQUENCE [LARGE SCALE GENOMIC DNA]</scope>
    <source>
        <strain>Bristol N2</strain>
    </source>
</reference>
<reference key="2">
    <citation type="journal article" date="2018" name="Dev. Biol.">
        <title>FACT complex gene duplicates exhibit redundant and non-redundant functions in C. elegans.</title>
        <authorList>
            <person name="Suggs B.Z."/>
            <person name="Latham A.L."/>
            <person name="Dawes A.T."/>
            <person name="Chamberlin H.M."/>
        </authorList>
    </citation>
    <scope>FUNCTION</scope>
    <scope>IDENTIFICATION IN FACT COMPLEX</scope>
    <scope>SUBCELLULAR LOCATION</scope>
    <scope>TISSUE SPECIFICITY</scope>
    <scope>DEVELOPMENTAL STAGE</scope>
    <scope>DISRUPTION PHENOTYPE</scope>
</reference>
<keyword id="KW-0158">Chromosome</keyword>
<keyword id="KW-0227">DNA damage</keyword>
<keyword id="KW-0234">DNA repair</keyword>
<keyword id="KW-0235">DNA replication</keyword>
<keyword id="KW-0238">DNA-binding</keyword>
<keyword id="KW-0539">Nucleus</keyword>
<keyword id="KW-1185">Reference proteome</keyword>
<keyword id="KW-0804">Transcription</keyword>
<keyword id="KW-0805">Transcription regulation</keyword>
<sequence length="689" mass="77752">MTELKFKGVYVEDIGHLTCGTLTLTENSINFIGDKGGKSVYITGTDVDKLKWQKLGNKPGLRVGLSDGGAHRFGGFLDDDLQKIQSFTSSNWSKSINQSNLFINGWNYGQADVKGKNIEFSWENEPIFEIPCTNVSNVIANKNEAILEFHQNEQSKVQLMEMRFHMPVDLENEEDTDKVEEFKKAVLAYAGLEAETEQPICLLTDILCTTPRGRYDIKVYPTSIALHGKTYDYKIPVKTINRLFLVPHKDGRQVYFVLSLNPPIRQGQTHYSYLIFEFGKDEEEDLELSLTDEQLDYFNGNLQREMTGPIYETISILFKSICNLKVTVPGRFLGSSGTPAIQCTHRQNLGLLYPMEKGFLFIQKPVMYIRFEEISSCHFARSDSGTVTRTFDFEIDLKTGSSLTFSAMDKEENNKLFDYLNKKEIKIRNSHRIDNKSAGYGSSDEDDIDPYKSTVKAEGREQDDDSDDESTDEDYDLDKDMKKQKNDKDSSEGSGSEPDDEYDSGSEKDASGTGESDPDEENIEPKKKESKEKKNKREKKEKPVKEKAVKKGKKTKDPNEPKRATTAYIIWFNANRNSMKEDGDTLGDVAKKAGAKWKSMSADDKKEWNDKAAQDKARYEAEMKEYKKNGGGVEKASGPSTKKSSDQSPGKQFKSKEHISDTDDSDDDEPLKAKKDESDAASESSGESD</sequence>
<organism>
    <name type="scientific">Caenorhabditis elegans</name>
    <dbReference type="NCBI Taxonomy" id="6239"/>
    <lineage>
        <taxon>Eukaryota</taxon>
        <taxon>Metazoa</taxon>
        <taxon>Ecdysozoa</taxon>
        <taxon>Nematoda</taxon>
        <taxon>Chromadorea</taxon>
        <taxon>Rhabditida</taxon>
        <taxon>Rhabditina</taxon>
        <taxon>Rhabditomorpha</taxon>
        <taxon>Rhabditoidea</taxon>
        <taxon>Rhabditidae</taxon>
        <taxon>Peloderinae</taxon>
        <taxon>Caenorhabditis</taxon>
    </lineage>
</organism>
<accession>O01683</accession>
<comment type="function">
    <text evidence="1 4">Component of the FACT complex, a general chromatin factor that acts to reorganize nucleosomes. The FACT complex is involved in multiple processes that require DNA as a template such as mRNA elongation, DNA replication and DNA repair. During transcription elongation the FACT complex acts as a histone chaperone that both destabilizes and restores nucleosomal structure. It facilitates the passage of RNA polymerase II and transcription by promoting the dissociation of one histone H2A-H2B dimer from the nucleosome, then subsequently promotes the reestablishment of the nucleosome following the passage of RNA polymerase II. Binds specifically to double-stranded DNA (By similarity). In embryos, may function redundantly with hmg-4 to promote cell cycle progression and development of the anterior pharynx (PubMed:30336114). In the germline, acts non-redundantly with hmg-4 to play a role in oocyte development (PubMed:30336114).</text>
</comment>
<comment type="subunit">
    <text evidence="7">Component of the FACT complex, a stable heterodimer of hmg-3 and spt-16 (Probable). The FACT complex may also include hmg-4 instead of hmg-3 (Probable).</text>
</comment>
<comment type="subcellular location">
    <subcellularLocation>
        <location evidence="2 4">Nucleus</location>
    </subcellularLocation>
    <subcellularLocation>
        <location evidence="1">Chromosome</location>
    </subcellularLocation>
</comment>
<comment type="tissue specificity">
    <text evidence="4">Expressed in the germline.</text>
</comment>
<comment type="developmental stage">
    <text evidence="4">Expressed throughout development (PubMed:30336114). First expressed in embryos at the 1-cell stage, but, in contrast to hmg-4, expression begins to decrease in somatic cells from the 8E stage until the 2-fold stage (PubMed:30336114). However, expression in the germline persists throughout the larval and adult stages (PubMed:30336114).</text>
</comment>
<comment type="disruption phenotype">
    <text evidence="4">RNAi-mediated knockdown at the L4 larval stage results in less than 10% embryonic lethality in offspring and surviving adults are sterile (PubMed:30336114). Double RNAi-mediated knockdown with hmg-4 at the L4 larval stage results in 60% embryonic lethality in offspring (PubMed:30336114). Double RNAi-mediated knockdown with hmg-4 in embryos results in defective cell cycle initiation, duration and completion and in failed development of the anterior pharynx (PubMed:30336114).</text>
</comment>
<comment type="similarity">
    <text evidence="6">Belongs to the SSRP1 family.</text>
</comment>